<protein>
    <recommendedName>
        <fullName>Gastrula zinc finger protein XlCGF32.1</fullName>
    </recommendedName>
</protein>
<comment type="function">
    <text>May be involved in transcriptional regulation.</text>
</comment>
<comment type="subcellular location">
    <subcellularLocation>
        <location evidence="2">Nucleus</location>
    </subcellularLocation>
</comment>
<comment type="similarity">
    <text evidence="2">Belongs to the krueppel C2H2-type zinc-finger protein family.</text>
</comment>
<evidence type="ECO:0000255" key="1">
    <source>
        <dbReference type="PROSITE-ProRule" id="PRU00042"/>
    </source>
</evidence>
<evidence type="ECO:0000305" key="2"/>
<sequence length="111" mass="12842">KREKSFDCTECGKSFKRKSKLKTHFLCHTGEKPFVCVHCGKGFRDNYKLSLHLRIHTGENLSVCPDCGKSYTDKNKLIVHMRIHTGEKFMCSECGKGFSDFYNLKSHLQIH</sequence>
<feature type="chain" id="PRO_0000047792" description="Gastrula zinc finger protein XlCGF32.1">
    <location>
        <begin position="1" status="less than"/>
        <end position="111" status="greater than"/>
    </location>
</feature>
<feature type="zinc finger region" description="C2H2-type 1" evidence="1">
    <location>
        <begin position="6"/>
        <end position="28"/>
    </location>
</feature>
<feature type="zinc finger region" description="C2H2-type 2" evidence="1">
    <location>
        <begin position="34"/>
        <end position="56"/>
    </location>
</feature>
<feature type="zinc finger region" description="C2H2-type 3" evidence="1">
    <location>
        <begin position="62"/>
        <end position="84"/>
    </location>
</feature>
<feature type="zinc finger region" description="C2H2-type 4" evidence="1">
    <location>
        <begin position="89"/>
        <end position="111"/>
    </location>
</feature>
<feature type="non-terminal residue">
    <location>
        <position position="1"/>
    </location>
</feature>
<feature type="non-terminal residue">
    <location>
        <position position="111"/>
    </location>
</feature>
<organism>
    <name type="scientific">Xenopus laevis</name>
    <name type="common">African clawed frog</name>
    <dbReference type="NCBI Taxonomy" id="8355"/>
    <lineage>
        <taxon>Eukaryota</taxon>
        <taxon>Metazoa</taxon>
        <taxon>Chordata</taxon>
        <taxon>Craniata</taxon>
        <taxon>Vertebrata</taxon>
        <taxon>Euteleostomi</taxon>
        <taxon>Amphibia</taxon>
        <taxon>Batrachia</taxon>
        <taxon>Anura</taxon>
        <taxon>Pipoidea</taxon>
        <taxon>Pipidae</taxon>
        <taxon>Xenopodinae</taxon>
        <taxon>Xenopus</taxon>
        <taxon>Xenopus</taxon>
    </lineage>
</organism>
<dbReference type="PIR" id="S06569">
    <property type="entry name" value="S06569"/>
</dbReference>
<dbReference type="SMR" id="P18719"/>
<dbReference type="Proteomes" id="UP000186698">
    <property type="component" value="Unplaced"/>
</dbReference>
<dbReference type="GO" id="GO:0000785">
    <property type="term" value="C:chromatin"/>
    <property type="evidence" value="ECO:0007669"/>
    <property type="project" value="TreeGrafter"/>
</dbReference>
<dbReference type="GO" id="GO:0031519">
    <property type="term" value="C:PcG protein complex"/>
    <property type="evidence" value="ECO:0007669"/>
    <property type="project" value="TreeGrafter"/>
</dbReference>
<dbReference type="GO" id="GO:0005667">
    <property type="term" value="C:transcription regulator complex"/>
    <property type="evidence" value="ECO:0007669"/>
    <property type="project" value="TreeGrafter"/>
</dbReference>
<dbReference type="GO" id="GO:0000981">
    <property type="term" value="F:DNA-binding transcription factor activity, RNA polymerase II-specific"/>
    <property type="evidence" value="ECO:0007669"/>
    <property type="project" value="TreeGrafter"/>
</dbReference>
<dbReference type="GO" id="GO:0000978">
    <property type="term" value="F:RNA polymerase II cis-regulatory region sequence-specific DNA binding"/>
    <property type="evidence" value="ECO:0007669"/>
    <property type="project" value="TreeGrafter"/>
</dbReference>
<dbReference type="GO" id="GO:0008270">
    <property type="term" value="F:zinc ion binding"/>
    <property type="evidence" value="ECO:0007669"/>
    <property type="project" value="UniProtKB-KW"/>
</dbReference>
<dbReference type="FunFam" id="3.30.160.60:FF:000759">
    <property type="entry name" value="zinc finger protein 16"/>
    <property type="match status" value="1"/>
</dbReference>
<dbReference type="FunFam" id="3.30.160.60:FF:001266">
    <property type="entry name" value="Zinc finger protein 662"/>
    <property type="match status" value="1"/>
</dbReference>
<dbReference type="FunFam" id="3.30.160.60:FF:000711">
    <property type="entry name" value="zinc finger protein 697"/>
    <property type="match status" value="1"/>
</dbReference>
<dbReference type="FunFam" id="3.30.160.60:FF:001450">
    <property type="entry name" value="zinc finger protein 774"/>
    <property type="match status" value="1"/>
</dbReference>
<dbReference type="Gene3D" id="3.30.160.60">
    <property type="entry name" value="Classic Zinc Finger"/>
    <property type="match status" value="4"/>
</dbReference>
<dbReference type="InterPro" id="IPR036236">
    <property type="entry name" value="Znf_C2H2_sf"/>
</dbReference>
<dbReference type="InterPro" id="IPR013087">
    <property type="entry name" value="Znf_C2H2_type"/>
</dbReference>
<dbReference type="PANTHER" id="PTHR14003">
    <property type="entry name" value="TRANSCRIPTIONAL REPRESSOR PROTEIN YY"/>
    <property type="match status" value="1"/>
</dbReference>
<dbReference type="PANTHER" id="PTHR14003:SF23">
    <property type="entry name" value="ZINC FINGER PROTEIN 143"/>
    <property type="match status" value="1"/>
</dbReference>
<dbReference type="Pfam" id="PF00096">
    <property type="entry name" value="zf-C2H2"/>
    <property type="match status" value="4"/>
</dbReference>
<dbReference type="SMART" id="SM00355">
    <property type="entry name" value="ZnF_C2H2"/>
    <property type="match status" value="4"/>
</dbReference>
<dbReference type="SUPFAM" id="SSF57667">
    <property type="entry name" value="beta-beta-alpha zinc fingers"/>
    <property type="match status" value="2"/>
</dbReference>
<dbReference type="PROSITE" id="PS00028">
    <property type="entry name" value="ZINC_FINGER_C2H2_1"/>
    <property type="match status" value="4"/>
</dbReference>
<dbReference type="PROSITE" id="PS50157">
    <property type="entry name" value="ZINC_FINGER_C2H2_2"/>
    <property type="match status" value="4"/>
</dbReference>
<keyword id="KW-0238">DNA-binding</keyword>
<keyword id="KW-0479">Metal-binding</keyword>
<keyword id="KW-0539">Nucleus</keyword>
<keyword id="KW-1185">Reference proteome</keyword>
<keyword id="KW-0677">Repeat</keyword>
<keyword id="KW-0804">Transcription</keyword>
<keyword id="KW-0805">Transcription regulation</keyword>
<keyword id="KW-0862">Zinc</keyword>
<keyword id="KW-0863">Zinc-finger</keyword>
<reference key="1">
    <citation type="journal article" date="1989" name="J. Mol. Biol.">
        <title>Second-order repeats in Xenopus laevis finger proteins.</title>
        <authorList>
            <person name="Nietfeld W."/>
            <person name="El-Baradi T."/>
            <person name="Mentzel H."/>
            <person name="Pieler T."/>
            <person name="Koester M."/>
            <person name="Poeting A."/>
            <person name="Knoechel W."/>
        </authorList>
    </citation>
    <scope>NUCLEOTIDE SEQUENCE</scope>
</reference>
<accession>P18719</accession>
<proteinExistence type="inferred from homology"/>
<name>ZG32_XENLA</name>